<keyword id="KW-0963">Cytoplasm</keyword>
<keyword id="KW-0274">FAD</keyword>
<keyword id="KW-0285">Flavoprotein</keyword>
<keyword id="KW-0520">NAD</keyword>
<keyword id="KW-0521">NADP</keyword>
<keyword id="KW-0560">Oxidoreductase</keyword>
<protein>
    <recommendedName>
        <fullName evidence="1">Soluble pyridine nucleotide transhydrogenase</fullName>
        <shortName evidence="1">STH</shortName>
        <ecNumber evidence="1">1.6.1.1</ecNumber>
    </recommendedName>
    <alternativeName>
        <fullName evidence="1">NAD(P)(+) transhydrogenase [B-specific]</fullName>
    </alternativeName>
</protein>
<gene>
    <name evidence="1" type="primary">sthA</name>
    <name evidence="1" type="synonym">udhA</name>
    <name type="ordered locus">YPA_0108</name>
</gene>
<organism>
    <name type="scientific">Yersinia pestis bv. Antiqua (strain Antiqua)</name>
    <dbReference type="NCBI Taxonomy" id="360102"/>
    <lineage>
        <taxon>Bacteria</taxon>
        <taxon>Pseudomonadati</taxon>
        <taxon>Pseudomonadota</taxon>
        <taxon>Gammaproteobacteria</taxon>
        <taxon>Enterobacterales</taxon>
        <taxon>Yersiniaceae</taxon>
        <taxon>Yersinia</taxon>
    </lineage>
</organism>
<comment type="function">
    <text evidence="1">Conversion of NADPH, generated by peripheral catabolic pathways, to NADH, which can enter the respiratory chain for energy generation.</text>
</comment>
<comment type="catalytic activity">
    <reaction evidence="1">
        <text>NAD(+) + NADPH = NADH + NADP(+)</text>
        <dbReference type="Rhea" id="RHEA:11692"/>
        <dbReference type="ChEBI" id="CHEBI:57540"/>
        <dbReference type="ChEBI" id="CHEBI:57783"/>
        <dbReference type="ChEBI" id="CHEBI:57945"/>
        <dbReference type="ChEBI" id="CHEBI:58349"/>
        <dbReference type="EC" id="1.6.1.1"/>
    </reaction>
</comment>
<comment type="cofactor">
    <cofactor evidence="1">
        <name>FAD</name>
        <dbReference type="ChEBI" id="CHEBI:57692"/>
    </cofactor>
    <text evidence="1">Binds 1 FAD per subunit.</text>
</comment>
<comment type="subcellular location">
    <subcellularLocation>
        <location evidence="1">Cytoplasm</location>
    </subcellularLocation>
</comment>
<comment type="similarity">
    <text evidence="1">Belongs to the class-I pyridine nucleotide-disulfide oxidoreductase family.</text>
</comment>
<proteinExistence type="inferred from homology"/>
<evidence type="ECO:0000255" key="1">
    <source>
        <dbReference type="HAMAP-Rule" id="MF_00247"/>
    </source>
</evidence>
<sequence>MQQHFHFDAIVIGSGPGGEGAAMGLVKQGARVAVIERYNNVGGGCTHWGTIPSKALRHAVSRIIEFNQNPLYSDNARTIKSSFADILNHADRVINQQTRMRQGFYDRNHCHMFSGDASFIDANTVNVRYADGTSDTLQADNIVIATGSRPYRPVNVDFNHERIYDSDTILQLSHEPQHVIIYGAGVIGCEYASIFRGLSVKVDLINTRDRLLAFLDQEMSDALSYHFWNNGVVIRHNEEFEQIEGTTDGVIVHLKSGKKVKADCLLYANGRTGNTSGLGLENIGLEADSRGLLKVNSMYQTALSHVYAVGDVIGYPSLASAAYDQGRIAAQAMIKGEANVHLIEDIPTGIYTIPEISSVGKTEQELTAMKVPYEVGRAQFKHLARAQIVGMDTGSLKILFHRETKQILGIHCFGERAAEIIHIGQAIMEQKGEGNTLEYFVNTTFNYPTMAEAYRVAALNGLNRLF</sequence>
<accession>Q1CBU5</accession>
<reference key="1">
    <citation type="journal article" date="2006" name="J. Bacteriol.">
        <title>Complete genome sequence of Yersinia pestis strains Antiqua and Nepal516: evidence of gene reduction in an emerging pathogen.</title>
        <authorList>
            <person name="Chain P.S.G."/>
            <person name="Hu P."/>
            <person name="Malfatti S.A."/>
            <person name="Radnedge L."/>
            <person name="Larimer F."/>
            <person name="Vergez L.M."/>
            <person name="Worsham P."/>
            <person name="Chu M.C."/>
            <person name="Andersen G.L."/>
        </authorList>
    </citation>
    <scope>NUCLEOTIDE SEQUENCE [LARGE SCALE GENOMIC DNA]</scope>
    <source>
        <strain>Antiqua</strain>
    </source>
</reference>
<feature type="chain" id="PRO_0000260246" description="Soluble pyridine nucleotide transhydrogenase">
    <location>
        <begin position="1"/>
        <end position="466"/>
    </location>
</feature>
<feature type="binding site" evidence="1">
    <location>
        <begin position="36"/>
        <end position="45"/>
    </location>
    <ligand>
        <name>FAD</name>
        <dbReference type="ChEBI" id="CHEBI:57692"/>
    </ligand>
</feature>
<name>STHA_YERPA</name>
<dbReference type="EC" id="1.6.1.1" evidence="1"/>
<dbReference type="EMBL" id="CP000308">
    <property type="protein sequence ID" value="ABG12077.1"/>
    <property type="molecule type" value="Genomic_DNA"/>
</dbReference>
<dbReference type="RefSeq" id="WP_002209477.1">
    <property type="nucleotide sequence ID" value="NZ_CP009906.1"/>
</dbReference>
<dbReference type="SMR" id="Q1CBU5"/>
<dbReference type="GeneID" id="96663600"/>
<dbReference type="KEGG" id="ypa:YPA_0108"/>
<dbReference type="Proteomes" id="UP000001971">
    <property type="component" value="Chromosome"/>
</dbReference>
<dbReference type="GO" id="GO:0005829">
    <property type="term" value="C:cytosol"/>
    <property type="evidence" value="ECO:0007669"/>
    <property type="project" value="TreeGrafter"/>
</dbReference>
<dbReference type="GO" id="GO:0004148">
    <property type="term" value="F:dihydrolipoyl dehydrogenase (NADH) activity"/>
    <property type="evidence" value="ECO:0007669"/>
    <property type="project" value="TreeGrafter"/>
</dbReference>
<dbReference type="GO" id="GO:0050660">
    <property type="term" value="F:flavin adenine dinucleotide binding"/>
    <property type="evidence" value="ECO:0007669"/>
    <property type="project" value="TreeGrafter"/>
</dbReference>
<dbReference type="GO" id="GO:0003957">
    <property type="term" value="F:NAD(P)+ transhydrogenase (Si-specific) activity"/>
    <property type="evidence" value="ECO:0007669"/>
    <property type="project" value="UniProtKB-UniRule"/>
</dbReference>
<dbReference type="GO" id="GO:0006103">
    <property type="term" value="P:2-oxoglutarate metabolic process"/>
    <property type="evidence" value="ECO:0007669"/>
    <property type="project" value="TreeGrafter"/>
</dbReference>
<dbReference type="GO" id="GO:0006739">
    <property type="term" value="P:NADP metabolic process"/>
    <property type="evidence" value="ECO:0007669"/>
    <property type="project" value="UniProtKB-UniRule"/>
</dbReference>
<dbReference type="FunFam" id="3.30.390.30:FF:000002">
    <property type="entry name" value="Soluble pyridine nucleotide transhydrogenase"/>
    <property type="match status" value="1"/>
</dbReference>
<dbReference type="FunFam" id="3.50.50.60:FF:000008">
    <property type="entry name" value="Soluble pyridine nucleotide transhydrogenase"/>
    <property type="match status" value="1"/>
</dbReference>
<dbReference type="Gene3D" id="3.30.390.30">
    <property type="match status" value="1"/>
</dbReference>
<dbReference type="Gene3D" id="3.50.50.60">
    <property type="entry name" value="FAD/NAD(P)-binding domain"/>
    <property type="match status" value="2"/>
</dbReference>
<dbReference type="HAMAP" id="MF_00247">
    <property type="entry name" value="SthA"/>
    <property type="match status" value="1"/>
</dbReference>
<dbReference type="InterPro" id="IPR050151">
    <property type="entry name" value="Class-I_Pyr_Nuc-Dis_Oxidored"/>
</dbReference>
<dbReference type="InterPro" id="IPR036188">
    <property type="entry name" value="FAD/NAD-bd_sf"/>
</dbReference>
<dbReference type="InterPro" id="IPR023753">
    <property type="entry name" value="FAD/NAD-binding_dom"/>
</dbReference>
<dbReference type="InterPro" id="IPR016156">
    <property type="entry name" value="FAD/NAD-linked_Rdtase_dimer_sf"/>
</dbReference>
<dbReference type="InterPro" id="IPR001100">
    <property type="entry name" value="Pyr_nuc-diS_OxRdtase"/>
</dbReference>
<dbReference type="InterPro" id="IPR004099">
    <property type="entry name" value="Pyr_nucl-diS_OxRdtase_dimer"/>
</dbReference>
<dbReference type="InterPro" id="IPR022962">
    <property type="entry name" value="STH_gammaproteobact"/>
</dbReference>
<dbReference type="NCBIfam" id="NF003585">
    <property type="entry name" value="PRK05249.1"/>
    <property type="match status" value="1"/>
</dbReference>
<dbReference type="PANTHER" id="PTHR22912">
    <property type="entry name" value="DISULFIDE OXIDOREDUCTASE"/>
    <property type="match status" value="1"/>
</dbReference>
<dbReference type="PANTHER" id="PTHR22912:SF93">
    <property type="entry name" value="SOLUBLE PYRIDINE NUCLEOTIDE TRANSHYDROGENASE"/>
    <property type="match status" value="1"/>
</dbReference>
<dbReference type="Pfam" id="PF07992">
    <property type="entry name" value="Pyr_redox_2"/>
    <property type="match status" value="1"/>
</dbReference>
<dbReference type="Pfam" id="PF02852">
    <property type="entry name" value="Pyr_redox_dim"/>
    <property type="match status" value="1"/>
</dbReference>
<dbReference type="PIRSF" id="PIRSF000350">
    <property type="entry name" value="Mercury_reductase_MerA"/>
    <property type="match status" value="1"/>
</dbReference>
<dbReference type="PRINTS" id="PR00368">
    <property type="entry name" value="FADPNR"/>
</dbReference>
<dbReference type="PRINTS" id="PR00411">
    <property type="entry name" value="PNDRDTASEI"/>
</dbReference>
<dbReference type="SUPFAM" id="SSF51905">
    <property type="entry name" value="FAD/NAD(P)-binding domain"/>
    <property type="match status" value="1"/>
</dbReference>
<dbReference type="SUPFAM" id="SSF55424">
    <property type="entry name" value="FAD/NAD-linked reductases, dimerisation (C-terminal) domain"/>
    <property type="match status" value="1"/>
</dbReference>